<dbReference type="EMBL" id="AE014075">
    <property type="protein sequence ID" value="AAN80988.1"/>
    <property type="status" value="ALT_INIT"/>
    <property type="molecule type" value="Genomic_DNA"/>
</dbReference>
<dbReference type="RefSeq" id="WP_000450409.1">
    <property type="nucleotide sequence ID" value="NZ_CP051263.1"/>
</dbReference>
<dbReference type="SMR" id="P0A8M7"/>
<dbReference type="STRING" id="199310.c2534"/>
<dbReference type="KEGG" id="ecc:c2534"/>
<dbReference type="eggNOG" id="COG2926">
    <property type="taxonomic scope" value="Bacteria"/>
</dbReference>
<dbReference type="HOGENOM" id="CLU_153146_0_0_6"/>
<dbReference type="Proteomes" id="UP000001410">
    <property type="component" value="Chromosome"/>
</dbReference>
<dbReference type="GO" id="GO:0005829">
    <property type="term" value="C:cytosol"/>
    <property type="evidence" value="ECO:0007669"/>
    <property type="project" value="TreeGrafter"/>
</dbReference>
<dbReference type="HAMAP" id="MF_00683">
    <property type="entry name" value="Pole_loc_TmaR"/>
    <property type="match status" value="1"/>
</dbReference>
<dbReference type="InterPro" id="IPR007458">
    <property type="entry name" value="DUF496"/>
</dbReference>
<dbReference type="InterPro" id="IPR053375">
    <property type="entry name" value="UPF0265"/>
</dbReference>
<dbReference type="NCBIfam" id="NF003844">
    <property type="entry name" value="PRK05423.1"/>
    <property type="match status" value="1"/>
</dbReference>
<dbReference type="NCBIfam" id="NF040881">
    <property type="entry name" value="PTS_reg_TmaR"/>
    <property type="match status" value="1"/>
</dbReference>
<dbReference type="PANTHER" id="PTHR39591">
    <property type="entry name" value="UPF0265 PROTEIN YEEX"/>
    <property type="match status" value="1"/>
</dbReference>
<dbReference type="PANTHER" id="PTHR39591:SF1">
    <property type="entry name" value="UPF0265 PROTEIN YEEX"/>
    <property type="match status" value="1"/>
</dbReference>
<dbReference type="Pfam" id="PF04363">
    <property type="entry name" value="DUF496"/>
    <property type="match status" value="1"/>
</dbReference>
<dbReference type="PIRSF" id="PIRSF028773">
    <property type="entry name" value="UCP028773"/>
    <property type="match status" value="1"/>
</dbReference>
<reference key="1">
    <citation type="journal article" date="2002" name="Proc. Natl. Acad. Sci. U.S.A.">
        <title>Extensive mosaic structure revealed by the complete genome sequence of uropathogenic Escherichia coli.</title>
        <authorList>
            <person name="Welch R.A."/>
            <person name="Burland V."/>
            <person name="Plunkett G. III"/>
            <person name="Redford P."/>
            <person name="Roesch P."/>
            <person name="Rasko D."/>
            <person name="Buckles E.L."/>
            <person name="Liou S.-R."/>
            <person name="Boutin A."/>
            <person name="Hackett J."/>
            <person name="Stroud D."/>
            <person name="Mayhew G.F."/>
            <person name="Rose D.J."/>
            <person name="Zhou S."/>
            <person name="Schwartz D.C."/>
            <person name="Perna N.T."/>
            <person name="Mobley H.L.T."/>
            <person name="Donnenberg M.S."/>
            <person name="Blattner F.R."/>
        </authorList>
    </citation>
    <scope>NUCLEOTIDE SEQUENCE [LARGE SCALE GENOMIC DNA]</scope>
    <source>
        <strain>CFT073 / ATCC 700928 / UPEC</strain>
    </source>
</reference>
<keyword id="KW-0175">Coiled coil</keyword>
<keyword id="KW-0963">Cytoplasm</keyword>
<keyword id="KW-1185">Reference proteome</keyword>
<proteinExistence type="inferred from homology"/>
<protein>
    <recommendedName>
        <fullName evidence="1">Pole-localizer protein TmaR</fullName>
    </recommendedName>
</protein>
<organism>
    <name type="scientific">Escherichia coli O6:H1 (strain CFT073 / ATCC 700928 / UPEC)</name>
    <dbReference type="NCBI Taxonomy" id="199310"/>
    <lineage>
        <taxon>Bacteria</taxon>
        <taxon>Pseudomonadati</taxon>
        <taxon>Pseudomonadota</taxon>
        <taxon>Gammaproteobacteria</taxon>
        <taxon>Enterobacterales</taxon>
        <taxon>Enterobacteriaceae</taxon>
        <taxon>Escherichia</taxon>
    </lineage>
</organism>
<evidence type="ECO:0000255" key="1">
    <source>
        <dbReference type="HAMAP-Rule" id="MF_00683"/>
    </source>
</evidence>
<evidence type="ECO:0000305" key="2"/>
<feature type="chain" id="PRO_0000072759" description="Pole-localizer protein TmaR">
    <location>
        <begin position="1"/>
        <end position="109"/>
    </location>
</feature>
<feature type="coiled-coil region" evidence="1">
    <location>
        <begin position="14"/>
        <end position="41"/>
    </location>
</feature>
<name>TMAR_ECOL6</name>
<sequence>METTKPSFQDVLEFVRLFRRKNKLQREIQDVEKKIRDNQKRVLLLDNLSDYIKPGMSVEAIQGIIASMKGDYEDRVDDYIIKNAELSKERRDISKKLKAMGEMKNGEAK</sequence>
<comment type="function">
    <text evidence="1">Pole-localizer protein involved in the regulation of several cellular processes.</text>
</comment>
<comment type="subcellular location">
    <subcellularLocation>
        <location evidence="1">Cytoplasm</location>
    </subcellularLocation>
    <text evidence="1">Forms clusters that localize mainly near one pole of the cell.</text>
</comment>
<comment type="similarity">
    <text evidence="1">Belongs to the pole-localizer TmaR family.</text>
</comment>
<comment type="sequence caution" evidence="2">
    <conflict type="erroneous initiation">
        <sequence resource="EMBL-CDS" id="AAN80988"/>
    </conflict>
</comment>
<accession>P0A8M7</accession>
<accession>O07992</accession>
<accession>O07995</accession>
<accession>P76367</accession>
<accession>Q8X8U3</accession>
<gene>
    <name evidence="1" type="primary">tmaR</name>
    <name type="synonym">yeeX</name>
    <name type="ordered locus">c2534</name>
</gene>